<comment type="function">
    <text evidence="9">Plays a key role in hydrogen peroxide removal.</text>
</comment>
<comment type="catalytic activity">
    <reaction evidence="9">
        <text>L-ascorbate + H2O2 = L-dehydroascorbate + 2 H2O</text>
        <dbReference type="Rhea" id="RHEA:22996"/>
        <dbReference type="ChEBI" id="CHEBI:15377"/>
        <dbReference type="ChEBI" id="CHEBI:16240"/>
        <dbReference type="ChEBI" id="CHEBI:38290"/>
        <dbReference type="ChEBI" id="CHEBI:58539"/>
        <dbReference type="EC" id="1.11.1.11"/>
    </reaction>
</comment>
<comment type="cofactor">
    <cofactor evidence="1">
        <name>heme b</name>
        <dbReference type="ChEBI" id="CHEBI:60344"/>
    </cofactor>
    <text evidence="1">Binds 1 heme b (iron(II)-protoporphyrin IX) group.</text>
</comment>
<comment type="activity regulation">
    <text evidence="9">Inhibited by p-chloromercuriphenylsulfonic acid (CMPSA).</text>
</comment>
<comment type="biophysicochemical properties">
    <kinetics>
        <KM evidence="9">4 mM for ascorbate</KM>
        <KM evidence="9">0.3 mM for H(2)O(2)</KM>
        <Vmax evidence="9">15.0 mM/min/mg enzyme with ascorbate as substrate</Vmax>
        <Vmax evidence="9">1.0 mM/min/mg enzyme with H(2)O(2) as substrate</Vmax>
    </kinetics>
    <phDependence>
        <text evidence="9">Optimum pH is 6-7.</text>
    </phDependence>
</comment>
<comment type="subcellular location">
    <subcellularLocation>
        <location evidence="8">Cytoplasm</location>
    </subcellularLocation>
</comment>
<comment type="tissue specificity">
    <text evidence="7 10 12">Expressed in roots, aerial vegetative parts and reproductive organs (PubMed:14644501, Ref.1). Expressed in roots, leaves, stems and flowers (PubMed:16397796).</text>
</comment>
<comment type="induction">
    <text evidence="5 6 7 11">By stress and hormones. By infection with rice blast fungus (M.grisea). Circadian-regulation. Expression is higher during the light phase than during the dark phase. Induced by hydrogen peroxide in leaves (PubMed:25546583).</text>
</comment>
<comment type="miscellaneous">
    <text evidence="1">Binds one cation per subunit; probably K(+), but might also be Ca(2+).</text>
</comment>
<comment type="similarity">
    <text evidence="15">Belongs to the peroxidase family. Ascorbate peroxidase subfamily.</text>
</comment>
<sequence>MAKNYPVVSAEYQEAVEKARQKLRALIAEKSCAPLMLRLAWHSAGTFDVSSKTGGPFGTMKTPAELSHAANAGLDIAVRMLEPIKEEIPTISYADFYQLAGVVAVEVSGGPAVPFHPGREDKPAPPPEGRLPDATKGSDHLRQVFGAQMGLSDQDIVALSGGHTLGRCHKERSGFEGPWTRNPLQFDNSYFTELLSGDKEGLLQLPSDKALLSDPAFRPLVEKYAADEKAFFEDYKEAHLKLSELGFADA</sequence>
<name>APX1_ORYSJ</name>
<gene>
    <name evidence="13" type="primary">APX1</name>
    <name evidence="18" type="ordered locus">Os03g0285700</name>
    <name evidence="17" type="ordered locus">LOC_Os03g17690</name>
    <name evidence="19" type="ORF">OsJ_009999</name>
    <name evidence="16" type="ORF">OSJNBa0013D02.10</name>
</gene>
<accession>Q10N21</accession>
<accession>B7E6Z4</accession>
<accession>P93404</accession>
<accession>Q84QS3</accession>
<accession>Q8GZZ2</accession>
<evidence type="ECO:0000250" key="1"/>
<evidence type="ECO:0000255" key="2">
    <source>
        <dbReference type="PROSITE-ProRule" id="PRU00297"/>
    </source>
</evidence>
<evidence type="ECO:0000255" key="3">
    <source>
        <dbReference type="PROSITE-ProRule" id="PRU10012"/>
    </source>
</evidence>
<evidence type="ECO:0000256" key="4">
    <source>
        <dbReference type="SAM" id="MobiDB-lite"/>
    </source>
</evidence>
<evidence type="ECO:0000269" key="5">
    <source>
    </source>
</evidence>
<evidence type="ECO:0000269" key="6">
    <source>
    </source>
</evidence>
<evidence type="ECO:0000269" key="7">
    <source>
    </source>
</evidence>
<evidence type="ECO:0000269" key="8">
    <source>
    </source>
</evidence>
<evidence type="ECO:0000269" key="9">
    <source>
    </source>
</evidence>
<evidence type="ECO:0000269" key="10">
    <source>
    </source>
</evidence>
<evidence type="ECO:0000269" key="11">
    <source>
    </source>
</evidence>
<evidence type="ECO:0000269" key="12">
    <source ref="1"/>
</evidence>
<evidence type="ECO:0000303" key="13">
    <source>
    </source>
</evidence>
<evidence type="ECO:0000303" key="14">
    <source ref="1"/>
</evidence>
<evidence type="ECO:0000305" key="15"/>
<evidence type="ECO:0000312" key="16">
    <source>
        <dbReference type="EMBL" id="AAO17000.1"/>
    </source>
</evidence>
<evidence type="ECO:0000312" key="17">
    <source>
        <dbReference type="EMBL" id="ABF95353.1"/>
    </source>
</evidence>
<evidence type="ECO:0000312" key="18">
    <source>
        <dbReference type="EMBL" id="BAS83623.1"/>
    </source>
</evidence>
<evidence type="ECO:0000312" key="19">
    <source>
        <dbReference type="EMBL" id="EAZ26516.1"/>
    </source>
</evidence>
<organism>
    <name type="scientific">Oryza sativa subsp. japonica</name>
    <name type="common">Rice</name>
    <dbReference type="NCBI Taxonomy" id="39947"/>
    <lineage>
        <taxon>Eukaryota</taxon>
        <taxon>Viridiplantae</taxon>
        <taxon>Streptophyta</taxon>
        <taxon>Embryophyta</taxon>
        <taxon>Tracheophyta</taxon>
        <taxon>Spermatophyta</taxon>
        <taxon>Magnoliopsida</taxon>
        <taxon>Liliopsida</taxon>
        <taxon>Poales</taxon>
        <taxon>Poaceae</taxon>
        <taxon>BOP clade</taxon>
        <taxon>Oryzoideae</taxon>
        <taxon>Oryzeae</taxon>
        <taxon>Oryzinae</taxon>
        <taxon>Oryza</taxon>
        <taxon>Oryza sativa</taxon>
    </lineage>
</organism>
<feature type="initiator methionine" description="Removed" evidence="6 8">
    <location>
        <position position="1"/>
    </location>
</feature>
<feature type="chain" id="PRO_0000055593" description="L-ascorbate peroxidase 1, cytosolic">
    <location>
        <begin position="2"/>
        <end position="250"/>
    </location>
</feature>
<feature type="region of interest" description="Disordered" evidence="4">
    <location>
        <begin position="113"/>
        <end position="137"/>
    </location>
</feature>
<feature type="active site" description="Proton acceptor" evidence="2 3">
    <location>
        <position position="42"/>
    </location>
</feature>
<feature type="binding site" description="axial binding residue" evidence="2">
    <location>
        <position position="163"/>
    </location>
    <ligand>
        <name>heme b</name>
        <dbReference type="ChEBI" id="CHEBI:60344"/>
    </ligand>
    <ligandPart>
        <name>Fe</name>
        <dbReference type="ChEBI" id="CHEBI:18248"/>
    </ligandPart>
</feature>
<feature type="binding site" evidence="1">
    <location>
        <position position="164"/>
    </location>
    <ligand>
        <name>K(+)</name>
        <dbReference type="ChEBI" id="CHEBI:29103"/>
    </ligand>
</feature>
<feature type="binding site" evidence="1">
    <location>
        <position position="180"/>
    </location>
    <ligand>
        <name>K(+)</name>
        <dbReference type="ChEBI" id="CHEBI:29103"/>
    </ligand>
</feature>
<feature type="binding site" evidence="1">
    <location>
        <position position="182"/>
    </location>
    <ligand>
        <name>K(+)</name>
        <dbReference type="ChEBI" id="CHEBI:29103"/>
    </ligand>
</feature>
<feature type="binding site" evidence="1">
    <location>
        <position position="187"/>
    </location>
    <ligand>
        <name>K(+)</name>
        <dbReference type="ChEBI" id="CHEBI:29103"/>
    </ligand>
</feature>
<feature type="site" description="Transition state stabilizer" evidence="2">
    <location>
        <position position="38"/>
    </location>
</feature>
<dbReference type="EC" id="1.11.1.11" evidence="9"/>
<dbReference type="EMBL" id="D45423">
    <property type="protein sequence ID" value="BAA08264.1"/>
    <property type="molecule type" value="mRNA"/>
</dbReference>
<dbReference type="EMBL" id="GQ848050">
    <property type="protein sequence ID" value="ADM86863.1"/>
    <property type="molecule type" value="mRNA"/>
</dbReference>
<dbReference type="EMBL" id="AC134232">
    <property type="protein sequence ID" value="AAO17000.1"/>
    <property type="molecule type" value="Genomic_DNA"/>
</dbReference>
<dbReference type="EMBL" id="DP000009">
    <property type="protein sequence ID" value="ABF95353.1"/>
    <property type="molecule type" value="Genomic_DNA"/>
</dbReference>
<dbReference type="EMBL" id="AP008209">
    <property type="protein sequence ID" value="BAF11683.1"/>
    <property type="molecule type" value="Genomic_DNA"/>
</dbReference>
<dbReference type="EMBL" id="AP014959">
    <property type="protein sequence ID" value="BAS83623.1"/>
    <property type="molecule type" value="Genomic_DNA"/>
</dbReference>
<dbReference type="EMBL" id="CM000140">
    <property type="protein sequence ID" value="EAZ26516.1"/>
    <property type="molecule type" value="Genomic_DNA"/>
</dbReference>
<dbReference type="EMBL" id="AK061841">
    <property type="protein sequence ID" value="BAG88141.1"/>
    <property type="molecule type" value="mRNA"/>
</dbReference>
<dbReference type="PIR" id="T03595">
    <property type="entry name" value="T03595"/>
</dbReference>
<dbReference type="RefSeq" id="XP_015630498.1">
    <property type="nucleotide sequence ID" value="XM_015775012.1"/>
</dbReference>
<dbReference type="SMR" id="Q10N21"/>
<dbReference type="FunCoup" id="Q10N21">
    <property type="interactions" value="917"/>
</dbReference>
<dbReference type="STRING" id="39947.Q10N21"/>
<dbReference type="PeroxiBase" id="1865">
    <property type="entry name" value="OsAPx01"/>
</dbReference>
<dbReference type="PaxDb" id="39947-Q10N21"/>
<dbReference type="EnsemblPlants" id="Os03t0285700-01">
    <property type="protein sequence ID" value="Os03t0285700-01"/>
    <property type="gene ID" value="Os03g0285700"/>
</dbReference>
<dbReference type="Gramene" id="Os03t0285700-01">
    <property type="protein sequence ID" value="Os03t0285700-01"/>
    <property type="gene ID" value="Os03g0285700"/>
</dbReference>
<dbReference type="KEGG" id="dosa:Os03g0285700"/>
<dbReference type="eggNOG" id="ENOG502QR1E">
    <property type="taxonomic scope" value="Eukaryota"/>
</dbReference>
<dbReference type="HOGENOM" id="CLU_036959_3_0_1"/>
<dbReference type="InParanoid" id="Q10N21"/>
<dbReference type="OMA" id="MAKNYPV"/>
<dbReference type="OrthoDB" id="2859658at2759"/>
<dbReference type="BRENDA" id="1.11.1.11">
    <property type="organism ID" value="4460"/>
</dbReference>
<dbReference type="SABIO-RK" id="Q10N21"/>
<dbReference type="Proteomes" id="UP000000763">
    <property type="component" value="Chromosome 3"/>
</dbReference>
<dbReference type="Proteomes" id="UP000007752">
    <property type="component" value="Chromosome 3"/>
</dbReference>
<dbReference type="Proteomes" id="UP000059680">
    <property type="component" value="Chromosome 3"/>
</dbReference>
<dbReference type="GO" id="GO:0009507">
    <property type="term" value="C:chloroplast"/>
    <property type="evidence" value="ECO:0000318"/>
    <property type="project" value="GO_Central"/>
</dbReference>
<dbReference type="GO" id="GO:0020037">
    <property type="term" value="F:heme binding"/>
    <property type="evidence" value="ECO:0007669"/>
    <property type="project" value="InterPro"/>
</dbReference>
<dbReference type="GO" id="GO:0016688">
    <property type="term" value="F:L-ascorbate peroxidase activity"/>
    <property type="evidence" value="ECO:0007669"/>
    <property type="project" value="UniProtKB-EC"/>
</dbReference>
<dbReference type="GO" id="GO:0046872">
    <property type="term" value="F:metal ion binding"/>
    <property type="evidence" value="ECO:0007669"/>
    <property type="project" value="UniProtKB-KW"/>
</dbReference>
<dbReference type="GO" id="GO:0004601">
    <property type="term" value="F:peroxidase activity"/>
    <property type="evidence" value="ECO:0000318"/>
    <property type="project" value="GO_Central"/>
</dbReference>
<dbReference type="GO" id="GO:0034599">
    <property type="term" value="P:cellular response to oxidative stress"/>
    <property type="evidence" value="ECO:0000318"/>
    <property type="project" value="GO_Central"/>
</dbReference>
<dbReference type="GO" id="GO:0042744">
    <property type="term" value="P:hydrogen peroxide catabolic process"/>
    <property type="evidence" value="ECO:0000318"/>
    <property type="project" value="GO_Central"/>
</dbReference>
<dbReference type="GO" id="GO:0000302">
    <property type="term" value="P:response to reactive oxygen species"/>
    <property type="evidence" value="ECO:0000318"/>
    <property type="project" value="GO_Central"/>
</dbReference>
<dbReference type="CDD" id="cd00691">
    <property type="entry name" value="ascorbate_peroxidase"/>
    <property type="match status" value="1"/>
</dbReference>
<dbReference type="FunFam" id="1.10.520.10:FF:000003">
    <property type="entry name" value="Cytosolic ascorbate peroxidase"/>
    <property type="match status" value="1"/>
</dbReference>
<dbReference type="FunFam" id="1.10.420.10:FF:000003">
    <property type="entry name" value="L-ascorbate peroxidase, cytosolic"/>
    <property type="match status" value="1"/>
</dbReference>
<dbReference type="Gene3D" id="1.10.520.10">
    <property type="match status" value="1"/>
</dbReference>
<dbReference type="Gene3D" id="1.10.420.10">
    <property type="entry name" value="Peroxidase, domain 2"/>
    <property type="match status" value="1"/>
</dbReference>
<dbReference type="InterPro" id="IPR044831">
    <property type="entry name" value="Ccp1-like"/>
</dbReference>
<dbReference type="InterPro" id="IPR002016">
    <property type="entry name" value="Haem_peroxidase"/>
</dbReference>
<dbReference type="InterPro" id="IPR010255">
    <property type="entry name" value="Haem_peroxidase_sf"/>
</dbReference>
<dbReference type="InterPro" id="IPR002207">
    <property type="entry name" value="Peroxidase_I"/>
</dbReference>
<dbReference type="InterPro" id="IPR019794">
    <property type="entry name" value="Peroxidases_AS"/>
</dbReference>
<dbReference type="InterPro" id="IPR019793">
    <property type="entry name" value="Peroxidases_heam-ligand_BS"/>
</dbReference>
<dbReference type="PANTHER" id="PTHR31356:SF57">
    <property type="entry name" value="L-ASCORBATE PEROXIDASE 1, CYTOSOLIC"/>
    <property type="match status" value="1"/>
</dbReference>
<dbReference type="PANTHER" id="PTHR31356">
    <property type="entry name" value="THYLAKOID LUMENAL 29 KDA PROTEIN, CHLOROPLASTIC-RELATED"/>
    <property type="match status" value="1"/>
</dbReference>
<dbReference type="Pfam" id="PF00141">
    <property type="entry name" value="peroxidase"/>
    <property type="match status" value="1"/>
</dbReference>
<dbReference type="PRINTS" id="PR00459">
    <property type="entry name" value="ASPEROXIDASE"/>
</dbReference>
<dbReference type="PRINTS" id="PR00458">
    <property type="entry name" value="PEROXIDASE"/>
</dbReference>
<dbReference type="SUPFAM" id="SSF48113">
    <property type="entry name" value="Heme-dependent peroxidases"/>
    <property type="match status" value="1"/>
</dbReference>
<dbReference type="PROSITE" id="PS00435">
    <property type="entry name" value="PEROXIDASE_1"/>
    <property type="match status" value="1"/>
</dbReference>
<dbReference type="PROSITE" id="PS00436">
    <property type="entry name" value="PEROXIDASE_2"/>
    <property type="match status" value="1"/>
</dbReference>
<dbReference type="PROSITE" id="PS50873">
    <property type="entry name" value="PEROXIDASE_4"/>
    <property type="match status" value="1"/>
</dbReference>
<proteinExistence type="evidence at protein level"/>
<keyword id="KW-0106">Calcium</keyword>
<keyword id="KW-0963">Cytoplasm</keyword>
<keyword id="KW-0903">Direct protein sequencing</keyword>
<keyword id="KW-0349">Heme</keyword>
<keyword id="KW-0376">Hydrogen peroxide</keyword>
<keyword id="KW-0408">Iron</keyword>
<keyword id="KW-0479">Metal-binding</keyword>
<keyword id="KW-0560">Oxidoreductase</keyword>
<keyword id="KW-0575">Peroxidase</keyword>
<keyword id="KW-0630">Potassium</keyword>
<keyword id="KW-1185">Reference proteome</keyword>
<keyword id="KW-0346">Stress response</keyword>
<protein>
    <recommendedName>
        <fullName evidence="15">L-ascorbate peroxidase 1, cytosolic</fullName>
        <shortName evidence="14">APXa</shortName>
        <ecNumber evidence="9">1.11.1.11</ecNumber>
    </recommendedName>
    <alternativeName>
        <fullName evidence="13">OsAPx1</fullName>
    </alternativeName>
</protein>
<reference key="1">
    <citation type="online journal article" date="1997" name="Plant Gene Register">
        <title>Cloning and characterization of cytosolic ascorbate peroxidase cDNA from rice.</title>
        <authorList>
            <person name="Morita S."/>
            <person name="Kaminaka H."/>
            <person name="Yokoi H."/>
            <person name="Masumura T."/>
            <person name="Tanaka K."/>
        </authorList>
        <locator>PGR97-012</locator>
    </citation>
    <scope>NUCLEOTIDE SEQUENCE [MRNA]</scope>
    <scope>TISSUE SPECIFICITY</scope>
    <source>
        <strain>cv. Nipponbare</strain>
        <tissue>Seedling</tissue>
    </source>
</reference>
<reference key="2">
    <citation type="submission" date="2009-08" db="EMBL/GenBank/DDBJ databases">
        <title>Structural and expression analysis of germinating seed genes in Oryza sativa L.</title>
        <authorList>
            <person name="Yoon U.H."/>
            <person name="Kim Y.H."/>
        </authorList>
    </citation>
    <scope>NUCLEOTIDE SEQUENCE [MRNA]</scope>
    <source>
        <strain>cv. Ilpoombyeo</strain>
        <tissue>Seed</tissue>
    </source>
</reference>
<reference key="3">
    <citation type="journal article" date="2005" name="Genome Res.">
        <title>Sequence, annotation, and analysis of synteny between rice chromosome 3 and diverged grass species.</title>
        <authorList>
            <consortium name="The rice chromosome 3 sequencing consortium"/>
            <person name="Buell C.R."/>
            <person name="Yuan Q."/>
            <person name="Ouyang S."/>
            <person name="Liu J."/>
            <person name="Zhu W."/>
            <person name="Wang A."/>
            <person name="Maiti R."/>
            <person name="Haas B."/>
            <person name="Wortman J."/>
            <person name="Pertea M."/>
            <person name="Jones K.M."/>
            <person name="Kim M."/>
            <person name="Overton L."/>
            <person name="Tsitrin T."/>
            <person name="Fadrosh D."/>
            <person name="Bera J."/>
            <person name="Weaver B."/>
            <person name="Jin S."/>
            <person name="Johri S."/>
            <person name="Reardon M."/>
            <person name="Webb K."/>
            <person name="Hill J."/>
            <person name="Moffat K."/>
            <person name="Tallon L."/>
            <person name="Van Aken S."/>
            <person name="Lewis M."/>
            <person name="Utterback T."/>
            <person name="Feldblyum T."/>
            <person name="Zismann V."/>
            <person name="Iobst S."/>
            <person name="Hsiao J."/>
            <person name="de Vazeille A.R."/>
            <person name="Salzberg S.L."/>
            <person name="White O."/>
            <person name="Fraser C.M."/>
            <person name="Yu Y."/>
            <person name="Kim H."/>
            <person name="Rambo T."/>
            <person name="Currie J."/>
            <person name="Collura K."/>
            <person name="Kernodle-Thompson S."/>
            <person name="Wei F."/>
            <person name="Kudrna K."/>
            <person name="Ammiraju J.S.S."/>
            <person name="Luo M."/>
            <person name="Goicoechea J.L."/>
            <person name="Wing R.A."/>
            <person name="Henry D."/>
            <person name="Oates R."/>
            <person name="Palmer M."/>
            <person name="Pries G."/>
            <person name="Saski C."/>
            <person name="Simmons J."/>
            <person name="Soderlund C."/>
            <person name="Nelson W."/>
            <person name="de la Bastide M."/>
            <person name="Spiegel L."/>
            <person name="Nascimento L."/>
            <person name="Huang E."/>
            <person name="Preston R."/>
            <person name="Zutavern T."/>
            <person name="Palmer L."/>
            <person name="O'Shaughnessy A."/>
            <person name="Dike S."/>
            <person name="McCombie W.R."/>
            <person name="Minx P."/>
            <person name="Cordum H."/>
            <person name="Wilson R."/>
            <person name="Jin W."/>
            <person name="Lee H.R."/>
            <person name="Jiang J."/>
            <person name="Jackson S."/>
        </authorList>
    </citation>
    <scope>NUCLEOTIDE SEQUENCE [LARGE SCALE GENOMIC DNA]</scope>
    <source>
        <strain>cv. Nipponbare</strain>
    </source>
</reference>
<reference key="4">
    <citation type="journal article" date="2005" name="Nature">
        <title>The map-based sequence of the rice genome.</title>
        <authorList>
            <consortium name="International rice genome sequencing project (IRGSP)"/>
        </authorList>
    </citation>
    <scope>NUCLEOTIDE SEQUENCE [LARGE SCALE GENOMIC DNA]</scope>
    <source>
        <strain>cv. Nipponbare</strain>
    </source>
</reference>
<reference key="5">
    <citation type="journal article" date="2008" name="Nucleic Acids Res.">
        <title>The rice annotation project database (RAP-DB): 2008 update.</title>
        <authorList>
            <consortium name="The rice annotation project (RAP)"/>
        </authorList>
    </citation>
    <scope>GENOME REANNOTATION</scope>
    <source>
        <strain>cv. Nipponbare</strain>
    </source>
</reference>
<reference key="6">
    <citation type="journal article" date="2013" name="Rice">
        <title>Improvement of the Oryza sativa Nipponbare reference genome using next generation sequence and optical map data.</title>
        <authorList>
            <person name="Kawahara Y."/>
            <person name="de la Bastide M."/>
            <person name="Hamilton J.P."/>
            <person name="Kanamori H."/>
            <person name="McCombie W.R."/>
            <person name="Ouyang S."/>
            <person name="Schwartz D.C."/>
            <person name="Tanaka T."/>
            <person name="Wu J."/>
            <person name="Zhou S."/>
            <person name="Childs K.L."/>
            <person name="Davidson R.M."/>
            <person name="Lin H."/>
            <person name="Quesada-Ocampo L."/>
            <person name="Vaillancourt B."/>
            <person name="Sakai H."/>
            <person name="Lee S.S."/>
            <person name="Kim J."/>
            <person name="Numa H."/>
            <person name="Itoh T."/>
            <person name="Buell C.R."/>
            <person name="Matsumoto T."/>
        </authorList>
    </citation>
    <scope>GENOME REANNOTATION</scope>
    <source>
        <strain>cv. Nipponbare</strain>
    </source>
</reference>
<reference key="7">
    <citation type="journal article" date="2005" name="PLoS Biol.">
        <title>The genomes of Oryza sativa: a history of duplications.</title>
        <authorList>
            <person name="Yu J."/>
            <person name="Wang J."/>
            <person name="Lin W."/>
            <person name="Li S."/>
            <person name="Li H."/>
            <person name="Zhou J."/>
            <person name="Ni P."/>
            <person name="Dong W."/>
            <person name="Hu S."/>
            <person name="Zeng C."/>
            <person name="Zhang J."/>
            <person name="Zhang Y."/>
            <person name="Li R."/>
            <person name="Xu Z."/>
            <person name="Li S."/>
            <person name="Li X."/>
            <person name="Zheng H."/>
            <person name="Cong L."/>
            <person name="Lin L."/>
            <person name="Yin J."/>
            <person name="Geng J."/>
            <person name="Li G."/>
            <person name="Shi J."/>
            <person name="Liu J."/>
            <person name="Lv H."/>
            <person name="Li J."/>
            <person name="Wang J."/>
            <person name="Deng Y."/>
            <person name="Ran L."/>
            <person name="Shi X."/>
            <person name="Wang X."/>
            <person name="Wu Q."/>
            <person name="Li C."/>
            <person name="Ren X."/>
            <person name="Wang J."/>
            <person name="Wang X."/>
            <person name="Li D."/>
            <person name="Liu D."/>
            <person name="Zhang X."/>
            <person name="Ji Z."/>
            <person name="Zhao W."/>
            <person name="Sun Y."/>
            <person name="Zhang Z."/>
            <person name="Bao J."/>
            <person name="Han Y."/>
            <person name="Dong L."/>
            <person name="Ji J."/>
            <person name="Chen P."/>
            <person name="Wu S."/>
            <person name="Liu J."/>
            <person name="Xiao Y."/>
            <person name="Bu D."/>
            <person name="Tan J."/>
            <person name="Yang L."/>
            <person name="Ye C."/>
            <person name="Zhang J."/>
            <person name="Xu J."/>
            <person name="Zhou Y."/>
            <person name="Yu Y."/>
            <person name="Zhang B."/>
            <person name="Zhuang S."/>
            <person name="Wei H."/>
            <person name="Liu B."/>
            <person name="Lei M."/>
            <person name="Yu H."/>
            <person name="Li Y."/>
            <person name="Xu H."/>
            <person name="Wei S."/>
            <person name="He X."/>
            <person name="Fang L."/>
            <person name="Zhang Z."/>
            <person name="Zhang Y."/>
            <person name="Huang X."/>
            <person name="Su Z."/>
            <person name="Tong W."/>
            <person name="Li J."/>
            <person name="Tong Z."/>
            <person name="Li S."/>
            <person name="Ye J."/>
            <person name="Wang L."/>
            <person name="Fang L."/>
            <person name="Lei T."/>
            <person name="Chen C.-S."/>
            <person name="Chen H.-C."/>
            <person name="Xu Z."/>
            <person name="Li H."/>
            <person name="Huang H."/>
            <person name="Zhang F."/>
            <person name="Xu H."/>
            <person name="Li N."/>
            <person name="Zhao C."/>
            <person name="Li S."/>
            <person name="Dong L."/>
            <person name="Huang Y."/>
            <person name="Li L."/>
            <person name="Xi Y."/>
            <person name="Qi Q."/>
            <person name="Li W."/>
            <person name="Zhang B."/>
            <person name="Hu W."/>
            <person name="Zhang Y."/>
            <person name="Tian X."/>
            <person name="Jiao Y."/>
            <person name="Liang X."/>
            <person name="Jin J."/>
            <person name="Gao L."/>
            <person name="Zheng W."/>
            <person name="Hao B."/>
            <person name="Liu S.-M."/>
            <person name="Wang W."/>
            <person name="Yuan L."/>
            <person name="Cao M."/>
            <person name="McDermott J."/>
            <person name="Samudrala R."/>
            <person name="Wang J."/>
            <person name="Wong G.K.-S."/>
            <person name="Yang H."/>
        </authorList>
    </citation>
    <scope>NUCLEOTIDE SEQUENCE [LARGE SCALE GENOMIC DNA]</scope>
    <source>
        <strain>cv. Nipponbare</strain>
    </source>
</reference>
<reference key="8">
    <citation type="journal article" date="2002" name="Proteomics">
        <title>Proteome analysis of differentially displayed proteins as a tool for investigating ozone stress in rice (Oryza sativa L.) seedlings.</title>
        <authorList>
            <person name="Agrawal G.K."/>
            <person name="Rakwal R."/>
            <person name="Yonekura M."/>
            <person name="Kubo A."/>
            <person name="Saji H."/>
        </authorList>
    </citation>
    <scope>PROTEIN SEQUENCE OF 2-11</scope>
    <scope>INDUCTION</scope>
    <source>
        <strain>cv. Nipponbare</strain>
        <tissue>Leaf</tissue>
    </source>
</reference>
<reference key="9">
    <citation type="journal article" date="2004" name="Nucleic Acids Res.">
        <title>Rice proteome database based on two-dimensional polyacrylamide gel electrophoresis: its status in 2003.</title>
        <authorList>
            <person name="Komatsu S."/>
            <person name="Kojima K."/>
            <person name="Suzuki K."/>
            <person name="Ozaki K."/>
            <person name="Higo K."/>
        </authorList>
    </citation>
    <scope>PROTEIN SEQUENCE OF 2-11; 25-34 AND 107-116</scope>
    <scope>SUBCELLULAR LOCATION</scope>
    <source>
        <strain>cv. Nipponbare</strain>
        <tissue>Anther</tissue>
        <tissue>Callus</tissue>
        <tissue>Panicle</tissue>
        <tissue>Root</tissue>
        <tissue>Sheath</tissue>
        <tissue>Stem</tissue>
    </source>
</reference>
<reference key="10">
    <citation type="journal article" date="2001" name="J. Exp. Bot.">
        <title>Heat shock-mediated APX gene expression and protection against chilling injury in rice seedlings.</title>
        <authorList>
            <person name="Sato Y."/>
            <person name="Murakami T."/>
            <person name="Funatsuki H."/>
            <person name="Matsuba S."/>
            <person name="Saruyama H."/>
            <person name="Tanida M."/>
        </authorList>
    </citation>
    <scope>INDUCTION</scope>
</reference>
<reference key="11">
    <citation type="journal article" date="2003" name="Gene">
        <title>Importance of ascorbate peroxidases OsAPX1 and OsAPX2 in the rice pathogen response pathways and growth and reproduction revealed by their transcriptional profiling.</title>
        <authorList>
            <person name="Agrawal G.K."/>
            <person name="Jwa N.-S."/>
            <person name="Iwahashi H."/>
            <person name="Rakwal R."/>
        </authorList>
    </citation>
    <scope>TISSUE SPECIFICITY</scope>
    <scope>INDUCTION</scope>
</reference>
<reference key="12">
    <citation type="journal article" date="2004" name="J. Mol. Evol.">
        <title>Analysis of the molecular evolutionary history of the ascorbate peroxidase gene family: inferences from the rice genome.</title>
        <authorList>
            <person name="Teixeira F.K."/>
            <person name="Menezes-Benavente L."/>
            <person name="Margis R."/>
            <person name="Margis-Pinheiro M."/>
        </authorList>
    </citation>
    <scope>NOMENCLATURE</scope>
</reference>
<reference key="13">
    <citation type="journal article" date="2005" name="Biotechnol. Lett.">
        <title>Purification and characterization of two ascorbate peroxidases of rice (Oryza sativa L.) expressed in Escherichia coli.</title>
        <authorList>
            <person name="Lu Z."/>
            <person name="Takano T."/>
            <person name="Liu S."/>
        </authorList>
    </citation>
    <scope>FUNCTION</scope>
    <scope>CATALYTIC ACTIVITY</scope>
    <scope>ACTIVITY REGULATION</scope>
    <scope>BIOPHYSICOCHEMICAL PROPERTIES</scope>
</reference>
<reference key="14">
    <citation type="journal article" date="2006" name="Planta">
        <title>Rice ascorbate peroxidase gene family encodes functionally diverse isoforms localized in different subcellular compartments.</title>
        <authorList>
            <person name="Teixeira F.K."/>
            <person name="Menezes-Benavente L."/>
            <person name="Galvao V.C."/>
            <person name="Margis R."/>
            <person name="Margis-Pinheiro M."/>
        </authorList>
    </citation>
    <scope>TISSUE SPECIFICITY</scope>
</reference>
<reference key="15">
    <citation type="journal article" date="2015" name="J. Plant Physiol.">
        <title>Transcriptional profile of genes involved in ascorbate glutathione cycle in senescing leaves for an early senescence leaf (esl) rice mutant.</title>
        <authorList>
            <person name="Li Z."/>
            <person name="Su D."/>
            <person name="Lei B."/>
            <person name="Wang F."/>
            <person name="Geng W."/>
            <person name="Pan G."/>
            <person name="Cheng F."/>
        </authorList>
    </citation>
    <scope>INDUCTION BY HYDROGEN PEROXIDE</scope>
</reference>